<dbReference type="EMBL" id="AE017245">
    <property type="protein sequence ID" value="AAZ43825.2"/>
    <property type="molecule type" value="Genomic_DNA"/>
</dbReference>
<dbReference type="RefSeq" id="WP_020003254.1">
    <property type="nucleotide sequence ID" value="NC_007294.1"/>
</dbReference>
<dbReference type="SMR" id="Q4A5Z6"/>
<dbReference type="STRING" id="262723.MS53_0413"/>
<dbReference type="GeneID" id="93530196"/>
<dbReference type="KEGG" id="msy:MS53_0413"/>
<dbReference type="eggNOG" id="COG0052">
    <property type="taxonomic scope" value="Bacteria"/>
</dbReference>
<dbReference type="HOGENOM" id="CLU_040318_0_0_14"/>
<dbReference type="OrthoDB" id="9808036at2"/>
<dbReference type="Proteomes" id="UP000000549">
    <property type="component" value="Chromosome"/>
</dbReference>
<dbReference type="GO" id="GO:0015935">
    <property type="term" value="C:small ribosomal subunit"/>
    <property type="evidence" value="ECO:0007669"/>
    <property type="project" value="InterPro"/>
</dbReference>
<dbReference type="GO" id="GO:0003735">
    <property type="term" value="F:structural constituent of ribosome"/>
    <property type="evidence" value="ECO:0007669"/>
    <property type="project" value="InterPro"/>
</dbReference>
<dbReference type="GO" id="GO:0006412">
    <property type="term" value="P:translation"/>
    <property type="evidence" value="ECO:0007669"/>
    <property type="project" value="UniProtKB-UniRule"/>
</dbReference>
<dbReference type="CDD" id="cd01425">
    <property type="entry name" value="RPS2"/>
    <property type="match status" value="1"/>
</dbReference>
<dbReference type="Gene3D" id="3.40.50.10490">
    <property type="entry name" value="Glucose-6-phosphate isomerase like protein, domain 1"/>
    <property type="match status" value="1"/>
</dbReference>
<dbReference type="Gene3D" id="1.10.287.610">
    <property type="entry name" value="Helix hairpin bin"/>
    <property type="match status" value="1"/>
</dbReference>
<dbReference type="HAMAP" id="MF_00291_B">
    <property type="entry name" value="Ribosomal_uS2_B"/>
    <property type="match status" value="1"/>
</dbReference>
<dbReference type="InterPro" id="IPR001865">
    <property type="entry name" value="Ribosomal_uS2"/>
</dbReference>
<dbReference type="InterPro" id="IPR005706">
    <property type="entry name" value="Ribosomal_uS2_bac/mit/plastid"/>
</dbReference>
<dbReference type="InterPro" id="IPR023591">
    <property type="entry name" value="Ribosomal_uS2_flav_dom_sf"/>
</dbReference>
<dbReference type="NCBIfam" id="TIGR01011">
    <property type="entry name" value="rpsB_bact"/>
    <property type="match status" value="1"/>
</dbReference>
<dbReference type="PANTHER" id="PTHR12534">
    <property type="entry name" value="30S RIBOSOMAL PROTEIN S2 PROKARYOTIC AND ORGANELLAR"/>
    <property type="match status" value="1"/>
</dbReference>
<dbReference type="PANTHER" id="PTHR12534:SF0">
    <property type="entry name" value="SMALL RIBOSOMAL SUBUNIT PROTEIN US2M"/>
    <property type="match status" value="1"/>
</dbReference>
<dbReference type="Pfam" id="PF00318">
    <property type="entry name" value="Ribosomal_S2"/>
    <property type="match status" value="1"/>
</dbReference>
<dbReference type="PRINTS" id="PR00395">
    <property type="entry name" value="RIBOSOMALS2"/>
</dbReference>
<dbReference type="SUPFAM" id="SSF52313">
    <property type="entry name" value="Ribosomal protein S2"/>
    <property type="match status" value="1"/>
</dbReference>
<evidence type="ECO:0000255" key="1">
    <source>
        <dbReference type="HAMAP-Rule" id="MF_00291"/>
    </source>
</evidence>
<evidence type="ECO:0000256" key="2">
    <source>
        <dbReference type="SAM" id="MobiDB-lite"/>
    </source>
</evidence>
<evidence type="ECO:0000305" key="3"/>
<reference key="1">
    <citation type="journal article" date="2005" name="J. Bacteriol.">
        <title>Swine and poultry pathogens: the complete genome sequences of two strains of Mycoplasma hyopneumoniae and a strain of Mycoplasma synoviae.</title>
        <authorList>
            <person name="Vasconcelos A.T.R."/>
            <person name="Ferreira H.B."/>
            <person name="Bizarro C.V."/>
            <person name="Bonatto S.L."/>
            <person name="Carvalho M.O."/>
            <person name="Pinto P.M."/>
            <person name="Almeida D.F."/>
            <person name="Almeida L.G.P."/>
            <person name="Almeida R."/>
            <person name="Alves-Junior L."/>
            <person name="Assuncao E.N."/>
            <person name="Azevedo V.A.C."/>
            <person name="Bogo M.R."/>
            <person name="Brigido M.M."/>
            <person name="Brocchi M."/>
            <person name="Burity H.A."/>
            <person name="Camargo A.A."/>
            <person name="Camargo S.S."/>
            <person name="Carepo M.S."/>
            <person name="Carraro D.M."/>
            <person name="de Mattos Cascardo J.C."/>
            <person name="Castro L.A."/>
            <person name="Cavalcanti G."/>
            <person name="Chemale G."/>
            <person name="Collevatti R.G."/>
            <person name="Cunha C.W."/>
            <person name="Dallagiovanna B."/>
            <person name="Dambros B.P."/>
            <person name="Dellagostin O.A."/>
            <person name="Falcao C."/>
            <person name="Fantinatti-Garboggini F."/>
            <person name="Felipe M.S.S."/>
            <person name="Fiorentin L."/>
            <person name="Franco G.R."/>
            <person name="Freitas N.S.A."/>
            <person name="Frias D."/>
            <person name="Grangeiro T.B."/>
            <person name="Grisard E.C."/>
            <person name="Guimaraes C.T."/>
            <person name="Hungria M."/>
            <person name="Jardim S.N."/>
            <person name="Krieger M.A."/>
            <person name="Laurino J.P."/>
            <person name="Lima L.F.A."/>
            <person name="Lopes M.I."/>
            <person name="Loreto E.L.S."/>
            <person name="Madeira H.M.F."/>
            <person name="Manfio G.P."/>
            <person name="Maranhao A.Q."/>
            <person name="Martinkovics C.T."/>
            <person name="Medeiros S.R.B."/>
            <person name="Moreira M.A.M."/>
            <person name="Neiva M."/>
            <person name="Ramalho-Neto C.E."/>
            <person name="Nicolas M.F."/>
            <person name="Oliveira S.C."/>
            <person name="Paixao R.F.C."/>
            <person name="Pedrosa F.O."/>
            <person name="Pena S.D.J."/>
            <person name="Pereira M."/>
            <person name="Pereira-Ferrari L."/>
            <person name="Piffer I."/>
            <person name="Pinto L.S."/>
            <person name="Potrich D.P."/>
            <person name="Salim A.C.M."/>
            <person name="Santos F.R."/>
            <person name="Schmitt R."/>
            <person name="Schneider M.P.C."/>
            <person name="Schrank A."/>
            <person name="Schrank I.S."/>
            <person name="Schuck A.F."/>
            <person name="Seuanez H.N."/>
            <person name="Silva D.W."/>
            <person name="Silva R."/>
            <person name="Silva S.C."/>
            <person name="Soares C.M.A."/>
            <person name="Souza K.R.L."/>
            <person name="Souza R.C."/>
            <person name="Staats C.C."/>
            <person name="Steffens M.B.R."/>
            <person name="Teixeira S.M.R."/>
            <person name="Urmenyi T.P."/>
            <person name="Vainstein M.H."/>
            <person name="Zuccherato L.W."/>
            <person name="Simpson A.J.G."/>
            <person name="Zaha A."/>
        </authorList>
    </citation>
    <scope>NUCLEOTIDE SEQUENCE [LARGE SCALE GENOMIC DNA]</scope>
    <source>
        <strain>53</strain>
    </source>
</reference>
<accession>Q4A5Z6</accession>
<sequence length="296" mass="33453">MNTKKEEVVSSPEATVEKKQTQSQTPIVSRDKLLEAGAYFGHKKQMWHPKMKEFIVPKRLNKNAHIIDIVKTQKYLEFAYSLVEKLAAKGVSFIFVGTKRQAKKTVKEAAERTNSLYVSERWLGGTLTNNSVIMKRVQKMNELDKKAEQGFKGYTKKEALLLQKQLDKLHQNLDGIKNMRRLPQVMIVTDLVEDKIAIQEAKKKKIKIIGIVDTNVDPTVIDFGIPANDDSSKSINLIVNILADAIAKTQGKKQMYAYQPDDKIVLSNPHELKKSEEASEVKAASTKEKLTEEASQ</sequence>
<feature type="chain" id="PRO_0000352016" description="Small ribosomal subunit protein uS2">
    <location>
        <begin position="1"/>
        <end position="296"/>
    </location>
</feature>
<feature type="region of interest" description="Disordered" evidence="2">
    <location>
        <begin position="1"/>
        <end position="24"/>
    </location>
</feature>
<feature type="region of interest" description="Disordered" evidence="2">
    <location>
        <begin position="270"/>
        <end position="296"/>
    </location>
</feature>
<protein>
    <recommendedName>
        <fullName evidence="1">Small ribosomal subunit protein uS2</fullName>
    </recommendedName>
    <alternativeName>
        <fullName evidence="3">30S ribosomal protein S2</fullName>
    </alternativeName>
</protein>
<proteinExistence type="inferred from homology"/>
<keyword id="KW-1185">Reference proteome</keyword>
<keyword id="KW-0687">Ribonucleoprotein</keyword>
<keyword id="KW-0689">Ribosomal protein</keyword>
<comment type="similarity">
    <text evidence="1">Belongs to the universal ribosomal protein uS2 family.</text>
</comment>
<name>RS2_MYCS5</name>
<gene>
    <name evidence="1" type="primary">rpsB</name>
    <name type="ordered locus">MS53_0413</name>
</gene>
<organism>
    <name type="scientific">Mycoplasmopsis synoviae (strain 53)</name>
    <name type="common">Mycoplasma synoviae</name>
    <dbReference type="NCBI Taxonomy" id="262723"/>
    <lineage>
        <taxon>Bacteria</taxon>
        <taxon>Bacillati</taxon>
        <taxon>Mycoplasmatota</taxon>
        <taxon>Mycoplasmoidales</taxon>
        <taxon>Metamycoplasmataceae</taxon>
        <taxon>Mycoplasmopsis</taxon>
    </lineage>
</organism>